<keyword id="KW-0501">Molybdenum cofactor biosynthesis</keyword>
<keyword id="KW-0663">Pyridoxal phosphate</keyword>
<keyword id="KW-1185">Reference proteome</keyword>
<keyword id="KW-0808">Transferase</keyword>
<evidence type="ECO:0000250" key="1">
    <source>
        <dbReference type="UniProtKB" id="Q96EN8"/>
    </source>
</evidence>
<evidence type="ECO:0000255" key="2">
    <source>
        <dbReference type="HAMAP-Rule" id="MF_03050"/>
    </source>
</evidence>
<evidence type="ECO:0000256" key="3">
    <source>
        <dbReference type="SAM" id="MobiDB-lite"/>
    </source>
</evidence>
<dbReference type="EC" id="2.8.1.9" evidence="2"/>
<dbReference type="EMBL" id="CH408029">
    <property type="protein sequence ID" value="EAQ93254.1"/>
    <property type="molecule type" value="Genomic_DNA"/>
</dbReference>
<dbReference type="RefSeq" id="XP_001220710.1">
    <property type="nucleotide sequence ID" value="XM_001220709.1"/>
</dbReference>
<dbReference type="SMR" id="Q2HE65"/>
<dbReference type="STRING" id="306901.Q2HE65"/>
<dbReference type="GeneID" id="4388218"/>
<dbReference type="VEuPathDB" id="FungiDB:CHGG_01489"/>
<dbReference type="eggNOG" id="KOG2142">
    <property type="taxonomic scope" value="Eukaryota"/>
</dbReference>
<dbReference type="HOGENOM" id="CLU_010913_0_0_1"/>
<dbReference type="InParanoid" id="Q2HE65"/>
<dbReference type="OMA" id="PCTRCQM"/>
<dbReference type="OrthoDB" id="10264306at2759"/>
<dbReference type="UniPathway" id="UPA00344"/>
<dbReference type="Proteomes" id="UP000001056">
    <property type="component" value="Unassembled WGS sequence"/>
</dbReference>
<dbReference type="GO" id="GO:0016829">
    <property type="term" value="F:lyase activity"/>
    <property type="evidence" value="ECO:0007669"/>
    <property type="project" value="UniProtKB-UniRule"/>
</dbReference>
<dbReference type="GO" id="GO:0008265">
    <property type="term" value="F:molybdenum cofactor sulfurtransferase activity"/>
    <property type="evidence" value="ECO:0007669"/>
    <property type="project" value="UniProtKB-UniRule"/>
</dbReference>
<dbReference type="GO" id="GO:0030151">
    <property type="term" value="F:molybdenum ion binding"/>
    <property type="evidence" value="ECO:0007669"/>
    <property type="project" value="UniProtKB-UniRule"/>
</dbReference>
<dbReference type="GO" id="GO:0030170">
    <property type="term" value="F:pyridoxal phosphate binding"/>
    <property type="evidence" value="ECO:0007669"/>
    <property type="project" value="UniProtKB-UniRule"/>
</dbReference>
<dbReference type="GO" id="GO:0006777">
    <property type="term" value="P:Mo-molybdopterin cofactor biosynthetic process"/>
    <property type="evidence" value="ECO:0007669"/>
    <property type="project" value="UniProtKB-UniRule"/>
</dbReference>
<dbReference type="Gene3D" id="3.40.640.10">
    <property type="entry name" value="Type I PLP-dependent aspartate aminotransferase-like (Major domain)"/>
    <property type="match status" value="1"/>
</dbReference>
<dbReference type="HAMAP" id="MF_03050">
    <property type="entry name" value="MOCOS"/>
    <property type="match status" value="1"/>
</dbReference>
<dbReference type="InterPro" id="IPR000192">
    <property type="entry name" value="Aminotrans_V_dom"/>
</dbReference>
<dbReference type="InterPro" id="IPR005302">
    <property type="entry name" value="MoCF_Sase_C"/>
</dbReference>
<dbReference type="InterPro" id="IPR028886">
    <property type="entry name" value="MoCo_sulfurase"/>
</dbReference>
<dbReference type="InterPro" id="IPR005303">
    <property type="entry name" value="MOCOS_middle"/>
</dbReference>
<dbReference type="InterPro" id="IPR015424">
    <property type="entry name" value="PyrdxlP-dep_Trfase"/>
</dbReference>
<dbReference type="InterPro" id="IPR015421">
    <property type="entry name" value="PyrdxlP-dep_Trfase_major"/>
</dbReference>
<dbReference type="PANTHER" id="PTHR14237:SF19">
    <property type="entry name" value="MITOCHONDRIAL AMIDOXIME REDUCING COMPONENT 1"/>
    <property type="match status" value="1"/>
</dbReference>
<dbReference type="PANTHER" id="PTHR14237">
    <property type="entry name" value="MOLYBDOPTERIN COFACTOR SULFURASE MOSC"/>
    <property type="match status" value="1"/>
</dbReference>
<dbReference type="Pfam" id="PF00266">
    <property type="entry name" value="Aminotran_5"/>
    <property type="match status" value="1"/>
</dbReference>
<dbReference type="Pfam" id="PF03473">
    <property type="entry name" value="MOSC"/>
    <property type="match status" value="1"/>
</dbReference>
<dbReference type="Pfam" id="PF03476">
    <property type="entry name" value="MOSC_N"/>
    <property type="match status" value="1"/>
</dbReference>
<dbReference type="SUPFAM" id="SSF141673">
    <property type="entry name" value="MOSC N-terminal domain-like"/>
    <property type="match status" value="1"/>
</dbReference>
<dbReference type="SUPFAM" id="SSF53383">
    <property type="entry name" value="PLP-dependent transferases"/>
    <property type="match status" value="1"/>
</dbReference>
<dbReference type="PROSITE" id="PS51340">
    <property type="entry name" value="MOSC"/>
    <property type="match status" value="1"/>
</dbReference>
<accession>Q2HE65</accession>
<reference key="1">
    <citation type="journal article" date="2015" name="Genome Announc.">
        <title>Draft genome sequence of the cellulolytic fungus Chaetomium globosum.</title>
        <authorList>
            <person name="Cuomo C.A."/>
            <person name="Untereiner W.A."/>
            <person name="Ma L.-J."/>
            <person name="Grabherr M."/>
            <person name="Birren B.W."/>
        </authorList>
    </citation>
    <scope>NUCLEOTIDE SEQUENCE [LARGE SCALE GENOMIC DNA]</scope>
    <source>
        <strain>ATCC 6205 / CBS 148.51 / DSM 1962 / NBRC 6347 / NRRL 1970</strain>
    </source>
</reference>
<proteinExistence type="inferred from homology"/>
<feature type="chain" id="PRO_0000369383" description="Molybdenum cofactor sulfurase">
    <location>
        <begin position="1"/>
        <end position="778"/>
    </location>
</feature>
<feature type="domain" description="MOSC" evidence="2">
    <location>
        <begin position="651"/>
        <end position="778"/>
    </location>
</feature>
<feature type="region of interest" description="Disordered" evidence="3">
    <location>
        <begin position="576"/>
        <end position="596"/>
    </location>
</feature>
<feature type="region of interest" description="Disordered" evidence="3">
    <location>
        <begin position="654"/>
        <end position="673"/>
    </location>
</feature>
<feature type="compositionally biased region" description="Low complexity" evidence="3">
    <location>
        <begin position="584"/>
        <end position="594"/>
    </location>
</feature>
<feature type="active site" evidence="2">
    <location>
        <position position="399"/>
    </location>
</feature>
<feature type="modified residue" description="N6-(pyridoxal phosphate)lysine" evidence="2">
    <location>
        <position position="235"/>
    </location>
</feature>
<sequence>MARTDDQAKSVDTRYNARVESLRDKEYPMLNGSIYLDHAGTTPYPKSLMDRFAKEMTSNLFGNPHSASASSQLSTARIEDIRLRVLRFFNADPAEFDLVFVANATAGIKLVADALRTAPDGFDYSYHQASHTSLIGVREEARNSLCLDDQEVDDWLGGGCPFENDSEDRPVLFAYPAQSNMDGRRYPLNWAEKVCRGGTRKTYTLLDAAALVCSSPLDLSQANAAPDFTVLSFYKIFGFPDLGALIVRRDAEEAFDTRRYFGGGTVDMVVCLKEQWHAPKAQFLHERLEDGTLPVHSIIALDAALDVHKQLFGSMRDVASHTAFLSAMLYTRLELLRHGNGQSVCVLYSPGPETANNGLSSGPVVSFNIRNSQGAWISLAEVEKLATLKGFHIRTGGVCNPGGIASALGLEPWEMRRNFSSGFRCGTDLDIMAGKPTGVIRASLGAMSTISDVDSFVEFIAEFYRDASLSPARTEPVPQPHDPSRLRIHSMSIYPIKSCCGFQVPSGTDWEVRPEGLAWDREWCLVHQGTGQALSQKRHSKMALIRPALDFERGQLRVSYAGELPAHQPREISIPLSKNPSLFRSSSSRSRSSRVCGEEIQAQTYSSTAINSFFSDVLGVPCLLARFPAGGHGKSMRHSKAHLQKHQLSLLPTARPALPGSFPPSPPDSDTEKTVSRRILLSNESPILAITLPSVTELNREIHLSKPGLKEVSPAVFRANIVMTPADPDVPLAPYAEDSWSGIKVGPQQHEFEMLGACRRCHMVCINQETAERARSRL</sequence>
<organism>
    <name type="scientific">Chaetomium globosum (strain ATCC 6205 / CBS 148.51 / DSM 1962 / NBRC 6347 / NRRL 1970)</name>
    <name type="common">Soil fungus</name>
    <dbReference type="NCBI Taxonomy" id="306901"/>
    <lineage>
        <taxon>Eukaryota</taxon>
        <taxon>Fungi</taxon>
        <taxon>Dikarya</taxon>
        <taxon>Ascomycota</taxon>
        <taxon>Pezizomycotina</taxon>
        <taxon>Sordariomycetes</taxon>
        <taxon>Sordariomycetidae</taxon>
        <taxon>Sordariales</taxon>
        <taxon>Chaetomiaceae</taxon>
        <taxon>Chaetomium</taxon>
    </lineage>
</organism>
<name>MOCOS_CHAGB</name>
<gene>
    <name evidence="2" type="primary">hxB</name>
    <name type="ORF">CHGG_01489</name>
</gene>
<protein>
    <recommendedName>
        <fullName evidence="2">Molybdenum cofactor sulfurase</fullName>
        <shortName evidence="2">MCS</shortName>
        <shortName evidence="2">MOS</shortName>
        <shortName evidence="2">MoCo sulfurase</shortName>
        <ecNumber evidence="2">2.8.1.9</ecNumber>
    </recommendedName>
    <alternativeName>
        <fullName evidence="2">Molybdenum cofactor sulfurtransferase</fullName>
    </alternativeName>
</protein>
<comment type="function">
    <text evidence="2">Sulfurates the molybdenum cofactor. Sulfation of molybdenum is essential for xanthine dehydrogenase (XDH) and aldehyde oxidase (ADO) enzymes in which molybdenum cofactor is liganded by 1 oxygen and 1 sulfur atom in active form.</text>
</comment>
<comment type="catalytic activity">
    <reaction evidence="2">
        <text>Mo-molybdopterin + L-cysteine + AH2 = thio-Mo-molybdopterin + L-alanine + A + H2O</text>
        <dbReference type="Rhea" id="RHEA:42636"/>
        <dbReference type="ChEBI" id="CHEBI:13193"/>
        <dbReference type="ChEBI" id="CHEBI:15377"/>
        <dbReference type="ChEBI" id="CHEBI:17499"/>
        <dbReference type="ChEBI" id="CHEBI:35235"/>
        <dbReference type="ChEBI" id="CHEBI:57972"/>
        <dbReference type="ChEBI" id="CHEBI:71302"/>
        <dbReference type="ChEBI" id="CHEBI:82685"/>
        <dbReference type="EC" id="2.8.1.9"/>
    </reaction>
</comment>
<comment type="cofactor">
    <cofactor evidence="2">
        <name>pyridoxal 5'-phosphate</name>
        <dbReference type="ChEBI" id="CHEBI:597326"/>
    </cofactor>
</comment>
<comment type="pathway">
    <text evidence="1">Cofactor biosynthesis; molybdopterin biosynthesis.</text>
</comment>
<comment type="similarity">
    <text evidence="2">Belongs to the class-V pyridoxal-phosphate-dependent aminotransferase family. MOCOS subfamily.</text>
</comment>